<dbReference type="EC" id="3.6.5.-" evidence="2"/>
<dbReference type="EMBL" id="K02841">
    <property type="protein sequence ID" value="AAA35350.1"/>
    <property type="molecule type" value="Genomic_DNA"/>
</dbReference>
<dbReference type="EMBL" id="CU329671">
    <property type="protein sequence ID" value="CAA16866.1"/>
    <property type="molecule type" value="Genomic_DNA"/>
</dbReference>
<dbReference type="PIR" id="A25072">
    <property type="entry name" value="A25072"/>
</dbReference>
<dbReference type="PIR" id="T39537">
    <property type="entry name" value="T39537"/>
</dbReference>
<dbReference type="RefSeq" id="NP_596774.1">
    <property type="nucleotide sequence ID" value="NM_001023795.2"/>
</dbReference>
<dbReference type="PDB" id="5MJS">
    <property type="method" value="EM"/>
    <property type="resolution" value="4.60 A"/>
    <property type="chains" value="E/F/G/H=1-444"/>
</dbReference>
<dbReference type="PDB" id="6S8M">
    <property type="method" value="EM"/>
    <property type="resolution" value="4.50 A"/>
    <property type="chains" value="A=1-455"/>
</dbReference>
<dbReference type="PDBsum" id="5MJS"/>
<dbReference type="PDBsum" id="6S8M"/>
<dbReference type="EMDB" id="EMD-3522"/>
<dbReference type="EMDB" id="EMD-3527"/>
<dbReference type="SMR" id="P04688"/>
<dbReference type="BioGRID" id="276411">
    <property type="interactions" value="24"/>
</dbReference>
<dbReference type="DIP" id="DIP-37976N"/>
<dbReference type="FunCoup" id="P04688">
    <property type="interactions" value="116"/>
</dbReference>
<dbReference type="IntAct" id="P04688">
    <property type="interactions" value="5"/>
</dbReference>
<dbReference type="STRING" id="284812.P04688"/>
<dbReference type="iPTMnet" id="P04688"/>
<dbReference type="PaxDb" id="4896-SPBC16A3.15c.1"/>
<dbReference type="EnsemblFungi" id="SPBC16A3.15c.1">
    <property type="protein sequence ID" value="SPBC16A3.15c.1:pep"/>
    <property type="gene ID" value="SPBC16A3.15c"/>
</dbReference>
<dbReference type="GeneID" id="2539864"/>
<dbReference type="KEGG" id="spo:2539864"/>
<dbReference type="PomBase" id="SPBC16A3.15c">
    <property type="gene designation" value="nda2"/>
</dbReference>
<dbReference type="VEuPathDB" id="FungiDB:SPBC16A3.15c"/>
<dbReference type="eggNOG" id="KOG1376">
    <property type="taxonomic scope" value="Eukaryota"/>
</dbReference>
<dbReference type="HOGENOM" id="CLU_015718_1_1_1"/>
<dbReference type="InParanoid" id="P04688"/>
<dbReference type="OMA" id="YMASCIL"/>
<dbReference type="PhylomeDB" id="P04688"/>
<dbReference type="Reactome" id="R-SPO-114608">
    <property type="pathway name" value="Platelet degranulation"/>
</dbReference>
<dbReference type="PRO" id="PR:P04688"/>
<dbReference type="Proteomes" id="UP000002485">
    <property type="component" value="Chromosome II"/>
</dbReference>
<dbReference type="GO" id="GO:0000235">
    <property type="term" value="C:astral microtubule"/>
    <property type="evidence" value="ECO:0000303"/>
    <property type="project" value="PomBase"/>
</dbReference>
<dbReference type="GO" id="GO:0005737">
    <property type="term" value="C:cytoplasm"/>
    <property type="evidence" value="ECO:0000318"/>
    <property type="project" value="GO_Central"/>
</dbReference>
<dbReference type="GO" id="GO:0005874">
    <property type="term" value="C:microtubule"/>
    <property type="evidence" value="ECO:0000318"/>
    <property type="project" value="GO_Central"/>
</dbReference>
<dbReference type="GO" id="GO:0005634">
    <property type="term" value="C:nucleus"/>
    <property type="evidence" value="ECO:0000318"/>
    <property type="project" value="GO_Central"/>
</dbReference>
<dbReference type="GO" id="GO:0005819">
    <property type="term" value="C:spindle"/>
    <property type="evidence" value="ECO:0000318"/>
    <property type="project" value="GO_Central"/>
</dbReference>
<dbReference type="GO" id="GO:0005525">
    <property type="term" value="F:GTP binding"/>
    <property type="evidence" value="ECO:0000318"/>
    <property type="project" value="GO_Central"/>
</dbReference>
<dbReference type="GO" id="GO:0016787">
    <property type="term" value="F:hydrolase activity"/>
    <property type="evidence" value="ECO:0007669"/>
    <property type="project" value="UniProtKB-KW"/>
</dbReference>
<dbReference type="GO" id="GO:0046872">
    <property type="term" value="F:metal ion binding"/>
    <property type="evidence" value="ECO:0007669"/>
    <property type="project" value="UniProtKB-KW"/>
</dbReference>
<dbReference type="GO" id="GO:0005200">
    <property type="term" value="F:structural constituent of cytoskeleton"/>
    <property type="evidence" value="ECO:0000318"/>
    <property type="project" value="GO_Central"/>
</dbReference>
<dbReference type="GO" id="GO:0000226">
    <property type="term" value="P:microtubule cytoskeleton organization"/>
    <property type="evidence" value="ECO:0000315"/>
    <property type="project" value="PomBase"/>
</dbReference>
<dbReference type="GO" id="GO:0000278">
    <property type="term" value="P:mitotic cell cycle"/>
    <property type="evidence" value="ECO:0000318"/>
    <property type="project" value="GO_Central"/>
</dbReference>
<dbReference type="GO" id="GO:0000280">
    <property type="term" value="P:nuclear division"/>
    <property type="evidence" value="ECO:0000318"/>
    <property type="project" value="GO_Central"/>
</dbReference>
<dbReference type="GO" id="GO:0098863">
    <property type="term" value="P:nuclear migration by microtubule mediated pushing forces"/>
    <property type="evidence" value="ECO:0000314"/>
    <property type="project" value="PomBase"/>
</dbReference>
<dbReference type="CDD" id="cd02186">
    <property type="entry name" value="alpha_tubulin"/>
    <property type="match status" value="1"/>
</dbReference>
<dbReference type="FunFam" id="1.10.287.600:FF:000005">
    <property type="entry name" value="Tubulin alpha chain"/>
    <property type="match status" value="1"/>
</dbReference>
<dbReference type="FunFam" id="3.30.1330.20:FF:000001">
    <property type="entry name" value="Tubulin alpha chain"/>
    <property type="match status" value="1"/>
</dbReference>
<dbReference type="FunFam" id="3.40.50.1440:FF:000008">
    <property type="entry name" value="Tubulin alpha chain"/>
    <property type="match status" value="1"/>
</dbReference>
<dbReference type="Gene3D" id="1.10.287.600">
    <property type="entry name" value="Helix hairpin bin"/>
    <property type="match status" value="1"/>
</dbReference>
<dbReference type="Gene3D" id="3.30.1330.20">
    <property type="entry name" value="Tubulin/FtsZ, C-terminal domain"/>
    <property type="match status" value="1"/>
</dbReference>
<dbReference type="Gene3D" id="3.40.50.1440">
    <property type="entry name" value="Tubulin/FtsZ, GTPase domain"/>
    <property type="match status" value="1"/>
</dbReference>
<dbReference type="InterPro" id="IPR002452">
    <property type="entry name" value="Alpha_tubulin"/>
</dbReference>
<dbReference type="InterPro" id="IPR008280">
    <property type="entry name" value="Tub_FtsZ_C"/>
</dbReference>
<dbReference type="InterPro" id="IPR000217">
    <property type="entry name" value="Tubulin"/>
</dbReference>
<dbReference type="InterPro" id="IPR037103">
    <property type="entry name" value="Tubulin/FtsZ-like_C"/>
</dbReference>
<dbReference type="InterPro" id="IPR018316">
    <property type="entry name" value="Tubulin/FtsZ_2-layer-sand-dom"/>
</dbReference>
<dbReference type="InterPro" id="IPR036525">
    <property type="entry name" value="Tubulin/FtsZ_GTPase_sf"/>
</dbReference>
<dbReference type="InterPro" id="IPR023123">
    <property type="entry name" value="Tubulin_C"/>
</dbReference>
<dbReference type="InterPro" id="IPR017975">
    <property type="entry name" value="Tubulin_CS"/>
</dbReference>
<dbReference type="InterPro" id="IPR003008">
    <property type="entry name" value="Tubulin_FtsZ_GTPase"/>
</dbReference>
<dbReference type="PANTHER" id="PTHR11588">
    <property type="entry name" value="TUBULIN"/>
    <property type="match status" value="1"/>
</dbReference>
<dbReference type="Pfam" id="PF00091">
    <property type="entry name" value="Tubulin"/>
    <property type="match status" value="1"/>
</dbReference>
<dbReference type="Pfam" id="PF03953">
    <property type="entry name" value="Tubulin_C"/>
    <property type="match status" value="1"/>
</dbReference>
<dbReference type="PRINTS" id="PR01162">
    <property type="entry name" value="ALPHATUBULIN"/>
</dbReference>
<dbReference type="PRINTS" id="PR01161">
    <property type="entry name" value="TUBULIN"/>
</dbReference>
<dbReference type="SMART" id="SM00864">
    <property type="entry name" value="Tubulin"/>
    <property type="match status" value="1"/>
</dbReference>
<dbReference type="SMART" id="SM00865">
    <property type="entry name" value="Tubulin_C"/>
    <property type="match status" value="1"/>
</dbReference>
<dbReference type="SUPFAM" id="SSF55307">
    <property type="entry name" value="Tubulin C-terminal domain-like"/>
    <property type="match status" value="1"/>
</dbReference>
<dbReference type="SUPFAM" id="SSF52490">
    <property type="entry name" value="Tubulin nucleotide-binding domain-like"/>
    <property type="match status" value="1"/>
</dbReference>
<dbReference type="PROSITE" id="PS00227">
    <property type="entry name" value="TUBULIN"/>
    <property type="match status" value="1"/>
</dbReference>
<evidence type="ECO:0000250" key="1"/>
<evidence type="ECO:0000250" key="2">
    <source>
        <dbReference type="UniProtKB" id="P68363"/>
    </source>
</evidence>
<evidence type="ECO:0000305" key="3"/>
<sequence length="455" mass="51152">MREVISVHVGQAGVQIGNACWELYCLEHGIGPDGFPTENSEVHKNNSYLNDGFGTFFSETGQGKFVPRSIYVDLEPNVIDQVRTGPYKDLFHPEQMVTGKEDASNNYARGHYTVGKEMIDSVLERIRRMADNCSGLQGFLVFHSFGGGTGSGLGALLLERLNMEYGKKSNLQFSVYPAPQVSTSVVEPYNSVLTTHATLDNSDCTFMVDNEACYDICRRNLDIERPTYENLNRLIAQVVSSITASLRFAGSLNVDLNEFQTNLVPYPRIHFPLVTYSPIVSAAKAFHESNSVQEITNQCFEPYNQMVKCDPRTGRYMATCLLYRGDVIPRDVQAAVTSIKSRRTIQFVDWCPTGFKIGICYEPPQHVPGSGIAKVNRAVCMLSNTTSIAEAWSRLDHKFDLMYSKRAFVHWYVGEGMEEGEFSEAREDLAALERDYEEVGQDSMDNEMYEADEEY</sequence>
<proteinExistence type="evidence at protein level"/>
<comment type="function">
    <text>Tubulin is the major constituent of microtubules, a cylinder consisting of laterally associated linear protofilaments composed of alpha- and beta-tubulin heterodimers. Microtubules grow by the addition of GTP-tubulin dimers to the microtubule end, where a stabilizing cap forms. Below the cap, tubulin dimers are in GDP-bound state, owing to GTPase activity of alpha-tubulin.</text>
</comment>
<comment type="catalytic activity">
    <reaction evidence="2">
        <text>GTP + H2O = GDP + phosphate + H(+)</text>
        <dbReference type="Rhea" id="RHEA:19669"/>
        <dbReference type="ChEBI" id="CHEBI:15377"/>
        <dbReference type="ChEBI" id="CHEBI:15378"/>
        <dbReference type="ChEBI" id="CHEBI:37565"/>
        <dbReference type="ChEBI" id="CHEBI:43474"/>
        <dbReference type="ChEBI" id="CHEBI:58189"/>
    </reaction>
    <physiologicalReaction direction="left-to-right" evidence="2">
        <dbReference type="Rhea" id="RHEA:19670"/>
    </physiologicalReaction>
</comment>
<comment type="cofactor">
    <cofactor evidence="2">
        <name>Mg(2+)</name>
        <dbReference type="ChEBI" id="CHEBI:18420"/>
    </cofactor>
</comment>
<comment type="subunit">
    <text>Dimer of alpha and beta chains. A typical microtubule is a hollow water-filled tube with an outer diameter of 25 nm and an inner diameter of 15 nM. Alpha-beta heterodimers associate head-to-tail to form protofilaments running lengthwise along the microtubule wall with the beta-tubulin subunit facing the microtubule plus end conferring a structural polarity. Microtubules usually have 13 protofilaments but different protofilament numbers can be found in some organisms and specialized cells.</text>
</comment>
<comment type="subcellular location">
    <subcellularLocation>
        <location>Cytoplasm</location>
        <location>Cytoskeleton</location>
    </subcellularLocation>
</comment>
<comment type="similarity">
    <text evidence="3">Belongs to the tubulin family.</text>
</comment>
<protein>
    <recommendedName>
        <fullName>Tubulin alpha-1 chain</fullName>
        <ecNumber evidence="2">3.6.5.-</ecNumber>
    </recommendedName>
</protein>
<gene>
    <name type="primary">nda2</name>
    <name type="ORF">SPBC16A3.15c</name>
</gene>
<keyword id="KW-0002">3D-structure</keyword>
<keyword id="KW-0963">Cytoplasm</keyword>
<keyword id="KW-0206">Cytoskeleton</keyword>
<keyword id="KW-0342">GTP-binding</keyword>
<keyword id="KW-0378">Hydrolase</keyword>
<keyword id="KW-0460">Magnesium</keyword>
<keyword id="KW-0479">Metal-binding</keyword>
<keyword id="KW-0493">Microtubule</keyword>
<keyword id="KW-0547">Nucleotide-binding</keyword>
<keyword id="KW-1185">Reference proteome</keyword>
<organism>
    <name type="scientific">Schizosaccharomyces pombe (strain 972 / ATCC 24843)</name>
    <name type="common">Fission yeast</name>
    <dbReference type="NCBI Taxonomy" id="284812"/>
    <lineage>
        <taxon>Eukaryota</taxon>
        <taxon>Fungi</taxon>
        <taxon>Dikarya</taxon>
        <taxon>Ascomycota</taxon>
        <taxon>Taphrinomycotina</taxon>
        <taxon>Schizosaccharomycetes</taxon>
        <taxon>Schizosaccharomycetales</taxon>
        <taxon>Schizosaccharomycetaceae</taxon>
        <taxon>Schizosaccharomyces</taxon>
    </lineage>
</organism>
<accession>P04688</accession>
<accession>O42920</accession>
<name>TBA1_SCHPO</name>
<reference key="1">
    <citation type="journal article" date="1984" name="Cell">
        <title>Identification of the pleiotropic cell division cycle gene NDA2 as one of two different alpha-tubulin genes in Schizosaccharomyces pombe.</title>
        <authorList>
            <person name="Toda T."/>
            <person name="Adachi Y."/>
            <person name="Hiraoka Y."/>
            <person name="Yanagida M."/>
        </authorList>
    </citation>
    <scope>NUCLEOTIDE SEQUENCE [GENOMIC DNA]</scope>
</reference>
<reference key="2">
    <citation type="journal article" date="2002" name="Nature">
        <title>The genome sequence of Schizosaccharomyces pombe.</title>
        <authorList>
            <person name="Wood V."/>
            <person name="Gwilliam R."/>
            <person name="Rajandream M.A."/>
            <person name="Lyne M.H."/>
            <person name="Lyne R."/>
            <person name="Stewart A."/>
            <person name="Sgouros J.G."/>
            <person name="Peat N."/>
            <person name="Hayles J."/>
            <person name="Baker S.G."/>
            <person name="Basham D."/>
            <person name="Bowman S."/>
            <person name="Brooks K."/>
            <person name="Brown D."/>
            <person name="Brown S."/>
            <person name="Chillingworth T."/>
            <person name="Churcher C.M."/>
            <person name="Collins M."/>
            <person name="Connor R."/>
            <person name="Cronin A."/>
            <person name="Davis P."/>
            <person name="Feltwell T."/>
            <person name="Fraser A."/>
            <person name="Gentles S."/>
            <person name="Goble A."/>
            <person name="Hamlin N."/>
            <person name="Harris D.E."/>
            <person name="Hidalgo J."/>
            <person name="Hodgson G."/>
            <person name="Holroyd S."/>
            <person name="Hornsby T."/>
            <person name="Howarth S."/>
            <person name="Huckle E.J."/>
            <person name="Hunt S."/>
            <person name="Jagels K."/>
            <person name="James K.D."/>
            <person name="Jones L."/>
            <person name="Jones M."/>
            <person name="Leather S."/>
            <person name="McDonald S."/>
            <person name="McLean J."/>
            <person name="Mooney P."/>
            <person name="Moule S."/>
            <person name="Mungall K.L."/>
            <person name="Murphy L.D."/>
            <person name="Niblett D."/>
            <person name="Odell C."/>
            <person name="Oliver K."/>
            <person name="O'Neil S."/>
            <person name="Pearson D."/>
            <person name="Quail M.A."/>
            <person name="Rabbinowitsch E."/>
            <person name="Rutherford K.M."/>
            <person name="Rutter S."/>
            <person name="Saunders D."/>
            <person name="Seeger K."/>
            <person name="Sharp S."/>
            <person name="Skelton J."/>
            <person name="Simmonds M.N."/>
            <person name="Squares R."/>
            <person name="Squares S."/>
            <person name="Stevens K."/>
            <person name="Taylor K."/>
            <person name="Taylor R.G."/>
            <person name="Tivey A."/>
            <person name="Walsh S.V."/>
            <person name="Warren T."/>
            <person name="Whitehead S."/>
            <person name="Woodward J.R."/>
            <person name="Volckaert G."/>
            <person name="Aert R."/>
            <person name="Robben J."/>
            <person name="Grymonprez B."/>
            <person name="Weltjens I."/>
            <person name="Vanstreels E."/>
            <person name="Rieger M."/>
            <person name="Schaefer M."/>
            <person name="Mueller-Auer S."/>
            <person name="Gabel C."/>
            <person name="Fuchs M."/>
            <person name="Duesterhoeft A."/>
            <person name="Fritzc C."/>
            <person name="Holzer E."/>
            <person name="Moestl D."/>
            <person name="Hilbert H."/>
            <person name="Borzym K."/>
            <person name="Langer I."/>
            <person name="Beck A."/>
            <person name="Lehrach H."/>
            <person name="Reinhardt R."/>
            <person name="Pohl T.M."/>
            <person name="Eger P."/>
            <person name="Zimmermann W."/>
            <person name="Wedler H."/>
            <person name="Wambutt R."/>
            <person name="Purnelle B."/>
            <person name="Goffeau A."/>
            <person name="Cadieu E."/>
            <person name="Dreano S."/>
            <person name="Gloux S."/>
            <person name="Lelaure V."/>
            <person name="Mottier S."/>
            <person name="Galibert F."/>
            <person name="Aves S.J."/>
            <person name="Xiang Z."/>
            <person name="Hunt C."/>
            <person name="Moore K."/>
            <person name="Hurst S.M."/>
            <person name="Lucas M."/>
            <person name="Rochet M."/>
            <person name="Gaillardin C."/>
            <person name="Tallada V.A."/>
            <person name="Garzon A."/>
            <person name="Thode G."/>
            <person name="Daga R.R."/>
            <person name="Cruzado L."/>
            <person name="Jimenez J."/>
            <person name="Sanchez M."/>
            <person name="del Rey F."/>
            <person name="Benito J."/>
            <person name="Dominguez A."/>
            <person name="Revuelta J.L."/>
            <person name="Moreno S."/>
            <person name="Armstrong J."/>
            <person name="Forsburg S.L."/>
            <person name="Cerutti L."/>
            <person name="Lowe T."/>
            <person name="McCombie W.R."/>
            <person name="Paulsen I."/>
            <person name="Potashkin J."/>
            <person name="Shpakovski G.V."/>
            <person name="Ussery D."/>
            <person name="Barrell B.G."/>
            <person name="Nurse P."/>
        </authorList>
    </citation>
    <scope>NUCLEOTIDE SEQUENCE [LARGE SCALE GENOMIC DNA]</scope>
    <source>
        <strain>972 / ATCC 24843</strain>
    </source>
</reference>
<feature type="chain" id="PRO_0000048225" description="Tubulin alpha-1 chain">
    <location>
        <begin position="1"/>
        <end position="455"/>
    </location>
</feature>
<feature type="active site" evidence="2">
    <location>
        <position position="258"/>
    </location>
</feature>
<feature type="binding site" evidence="2">
    <location>
        <position position="11"/>
    </location>
    <ligand>
        <name>GTP</name>
        <dbReference type="ChEBI" id="CHEBI:37565"/>
    </ligand>
</feature>
<feature type="binding site" evidence="2">
    <location>
        <position position="75"/>
    </location>
    <ligand>
        <name>GTP</name>
        <dbReference type="ChEBI" id="CHEBI:37565"/>
    </ligand>
</feature>
<feature type="binding site" evidence="2">
    <location>
        <position position="75"/>
    </location>
    <ligand>
        <name>Mg(2+)</name>
        <dbReference type="ChEBI" id="CHEBI:18420"/>
    </ligand>
</feature>
<feature type="binding site" evidence="2">
    <location>
        <position position="144"/>
    </location>
    <ligand>
        <name>GTP</name>
        <dbReference type="ChEBI" id="CHEBI:37565"/>
    </ligand>
</feature>
<feature type="binding site" evidence="2">
    <location>
        <position position="148"/>
    </location>
    <ligand>
        <name>GTP</name>
        <dbReference type="ChEBI" id="CHEBI:37565"/>
    </ligand>
</feature>
<feature type="binding site" evidence="2">
    <location>
        <position position="149"/>
    </location>
    <ligand>
        <name>GTP</name>
        <dbReference type="ChEBI" id="CHEBI:37565"/>
    </ligand>
</feature>
<feature type="binding site" evidence="2">
    <location>
        <position position="183"/>
    </location>
    <ligand>
        <name>GTP</name>
        <dbReference type="ChEBI" id="CHEBI:37565"/>
    </ligand>
</feature>
<feature type="binding site" evidence="2">
    <location>
        <position position="210"/>
    </location>
    <ligand>
        <name>GTP</name>
        <dbReference type="ChEBI" id="CHEBI:37565"/>
    </ligand>
</feature>
<feature type="binding site" evidence="2">
    <location>
        <position position="232"/>
    </location>
    <ligand>
        <name>GTP</name>
        <dbReference type="ChEBI" id="CHEBI:37565"/>
    </ligand>
</feature>
<feature type="site" description="Involved in polymerization" evidence="1">
    <location>
        <position position="455"/>
    </location>
</feature>
<feature type="sequence conflict" description="In Ref. 1; AAA35350." evidence="3" ref="1">
    <original>A</original>
    <variation>T</variation>
    <location>
        <position position="155"/>
    </location>
</feature>